<protein>
    <recommendedName>
        <fullName>2-hydroxyacyl-CoA lyase 2</fullName>
        <ecNumber evidence="2">4.1.2.-</ecNumber>
    </recommendedName>
    <alternativeName>
        <fullName>Acetolactate synthase-like protein</fullName>
    </alternativeName>
    <alternativeName>
        <fullName>IlvB-like protein</fullName>
    </alternativeName>
</protein>
<comment type="function">
    <text evidence="2">Endoplasmic reticulum 2-OH acyl-CoA lyase involved in the cleavage (C1 removal) reaction in the fatty acid alpha-oxydation in a thiamine pyrophosphate (TPP)-dependent manner. Involved in the phytosphingosine degradation pathway.</text>
</comment>
<comment type="catalytic activity">
    <reaction evidence="2">
        <text>2-hydroxyoctadecanoyl-CoA = heptadecanal + formyl-CoA</text>
        <dbReference type="Rhea" id="RHEA:55196"/>
        <dbReference type="ChEBI" id="CHEBI:57376"/>
        <dbReference type="ChEBI" id="CHEBI:74116"/>
        <dbReference type="ChEBI" id="CHEBI:138631"/>
    </reaction>
    <physiologicalReaction direction="left-to-right" evidence="2">
        <dbReference type="Rhea" id="RHEA:55197"/>
    </physiologicalReaction>
</comment>
<comment type="catalytic activity">
    <reaction evidence="2">
        <text>(2R)-hydroxyhexadecanoyl-CoA = pentadecanal + formyl-CoA</text>
        <dbReference type="Rhea" id="RHEA:55212"/>
        <dbReference type="ChEBI" id="CHEBI:17302"/>
        <dbReference type="ChEBI" id="CHEBI:57376"/>
        <dbReference type="ChEBI" id="CHEBI:138654"/>
    </reaction>
    <physiologicalReaction direction="left-to-right" evidence="2">
        <dbReference type="Rhea" id="RHEA:55213"/>
    </physiologicalReaction>
</comment>
<comment type="cofactor">
    <cofactor evidence="4">
        <name>Mg(2+)</name>
        <dbReference type="ChEBI" id="CHEBI:18420"/>
    </cofactor>
    <text evidence="4">Binds 1 Mg(2+) ion per subunit.</text>
</comment>
<comment type="cofactor">
    <cofactor evidence="2">
        <name>thiamine diphosphate</name>
        <dbReference type="ChEBI" id="CHEBI:58937"/>
    </cofactor>
    <text evidence="1">Binds 1 thiamine pyrophosphate per subunit.</text>
</comment>
<comment type="subcellular location">
    <subcellularLocation>
        <location evidence="2">Endoplasmic reticulum membrane</location>
        <topology evidence="5">Single-pass membrane protein</topology>
    </subcellularLocation>
</comment>
<comment type="similarity">
    <text evidence="6">Belongs to the TPP enzyme family.</text>
</comment>
<comment type="sequence caution" evidence="6">
    <conflict type="erroneous initiation">
        <sequence resource="EMBL-CDS" id="AAI49990"/>
    </conflict>
</comment>
<comment type="sequence caution" evidence="6">
    <conflict type="erroneous initiation">
        <sequence resource="EMBL-CDS" id="AAX08821"/>
    </conflict>
</comment>
<feature type="chain" id="PRO_0000314824" description="2-hydroxyacyl-CoA lyase 2">
    <location>
        <begin position="1"/>
        <end position="632"/>
    </location>
</feature>
<feature type="transmembrane region" description="Helical" evidence="5">
    <location>
        <begin position="10"/>
        <end position="30"/>
    </location>
</feature>
<feature type="region of interest" description="Thiamine pyrophosphate binding" evidence="3">
    <location>
        <begin position="470"/>
        <end position="550"/>
    </location>
</feature>
<feature type="binding site" evidence="3">
    <location>
        <position position="98"/>
    </location>
    <ligand>
        <name>thiamine diphosphate</name>
        <dbReference type="ChEBI" id="CHEBI:58937"/>
    </ligand>
</feature>
<feature type="binding site" evidence="3">
    <location>
        <position position="521"/>
    </location>
    <ligand>
        <name>Mg(2+)</name>
        <dbReference type="ChEBI" id="CHEBI:18420"/>
    </ligand>
</feature>
<feature type="binding site" evidence="3">
    <location>
        <position position="547"/>
    </location>
    <ligand>
        <name>Mg(2+)</name>
        <dbReference type="ChEBI" id="CHEBI:18420"/>
    </ligand>
</feature>
<feature type="sequence conflict" description="In Ref. 1; AAX08821." evidence="6" ref="1">
    <original>A</original>
    <variation>V</variation>
    <location>
        <position position="10"/>
    </location>
</feature>
<reference key="1">
    <citation type="journal article" date="2005" name="BMC Genomics">
        <title>Characterization of 954 bovine full-CDS cDNA sequences.</title>
        <authorList>
            <person name="Harhay G.P."/>
            <person name="Sonstegard T.S."/>
            <person name="Keele J.W."/>
            <person name="Heaton M.P."/>
            <person name="Clawson M.L."/>
            <person name="Snelling W.M."/>
            <person name="Wiedmann R.T."/>
            <person name="Van Tassell C.P."/>
            <person name="Smith T.P.L."/>
        </authorList>
    </citation>
    <scope>NUCLEOTIDE SEQUENCE [LARGE SCALE MRNA]</scope>
</reference>
<reference key="2">
    <citation type="submission" date="2007-07" db="EMBL/GenBank/DDBJ databases">
        <authorList>
            <consortium name="NIH - Mammalian Gene Collection (MGC) project"/>
        </authorList>
    </citation>
    <scope>NUCLEOTIDE SEQUENCE [LARGE SCALE MRNA]</scope>
    <source>
        <strain>Hereford</strain>
        <tissue>Hypothalamus</tissue>
    </source>
</reference>
<gene>
    <name type="primary">ILVBL</name>
    <name type="synonym">AHAS</name>
    <name evidence="2" type="synonym">HACL2</name>
</gene>
<organism>
    <name type="scientific">Bos taurus</name>
    <name type="common">Bovine</name>
    <dbReference type="NCBI Taxonomy" id="9913"/>
    <lineage>
        <taxon>Eukaryota</taxon>
        <taxon>Metazoa</taxon>
        <taxon>Chordata</taxon>
        <taxon>Craniata</taxon>
        <taxon>Vertebrata</taxon>
        <taxon>Euteleostomi</taxon>
        <taxon>Mammalia</taxon>
        <taxon>Eutheria</taxon>
        <taxon>Laurasiatheria</taxon>
        <taxon>Artiodactyla</taxon>
        <taxon>Ruminantia</taxon>
        <taxon>Pecora</taxon>
        <taxon>Bovidae</taxon>
        <taxon>Bovinae</taxon>
        <taxon>Bos</taxon>
    </lineage>
</organism>
<accession>A6QQT9</accession>
<accession>Q5E9W6</accession>
<name>HACL2_BOVIN</name>
<evidence type="ECO:0000250" key="1"/>
<evidence type="ECO:0000250" key="2">
    <source>
        <dbReference type="UniProtKB" id="A1L0T0"/>
    </source>
</evidence>
<evidence type="ECO:0000250" key="3">
    <source>
        <dbReference type="UniProtKB" id="P40149"/>
    </source>
</evidence>
<evidence type="ECO:0000250" key="4">
    <source>
        <dbReference type="UniProtKB" id="Q8CHM7"/>
    </source>
</evidence>
<evidence type="ECO:0000255" key="5"/>
<evidence type="ECO:0000305" key="6"/>
<sequence>METAVAAAPAWGFFSSFLLLAFGTLVAALLGAAHRLGLFYQLMHKVDTASTRHGGENVAAVLKAHGVRFLFTLVGGHISPLLVACEKLGIRVVDTRHEVTAVFAADAVARLTGTVGVAAVTAGPGLTNTVTAVKNAQIAQSPVLLLGGAASTLLQNRGALQAIDQIALFRPLCKFCASVRRVRDIIPTLRAAMAAAQSGTPGPVFVELPLDVLYPYFMVQKEMVPAKPPKGLMSRAVHWYLANSLANLFAGAWEPQPEGPLPLDIPQASPQQVQRCVEILSRAKKPLMLIGSQALLPPTSSDKLRVAVETLGIPCFLAGMARGLLGRNHPLHFRQNRRAALKKADVVVLAGAVCDFRLSYGRVLSRSSKIIVVNRDRKEMLINSDIFWKPQEAVQGDVGSFVVKLVEGLRGQMWASDWAEELRQADQQKEQAFREKALMPVAQHLNPVRVLQLVEDTLPDNSILVVDGGDFVGTAAYLVQPRGPLRWLDPGAFGTLGVGAGFALGAKLCRPDAEVWCLFGDGAFGYSLIEFDTFVRHKIPVMALIGNDAGWTQISREQVPSLGSNVACGLAYTDYHKAAQGLGAQGLLLSRENEDQVVKVLRDAQQWCQDGHPVVVNILIGRTDFRDGSIAM</sequence>
<dbReference type="EC" id="4.1.2.-" evidence="2"/>
<dbReference type="EMBL" id="BT020804">
    <property type="protein sequence ID" value="AAX08821.1"/>
    <property type="status" value="ALT_INIT"/>
    <property type="molecule type" value="mRNA"/>
</dbReference>
<dbReference type="EMBL" id="BC149989">
    <property type="protein sequence ID" value="AAI49990.1"/>
    <property type="status" value="ALT_INIT"/>
    <property type="molecule type" value="mRNA"/>
</dbReference>
<dbReference type="RefSeq" id="NP_001015535.2">
    <property type="nucleotide sequence ID" value="NM_001015535.2"/>
</dbReference>
<dbReference type="RefSeq" id="XP_005208552.1">
    <property type="nucleotide sequence ID" value="XM_005208495.5"/>
</dbReference>
<dbReference type="SMR" id="A6QQT9"/>
<dbReference type="FunCoup" id="A6QQT9">
    <property type="interactions" value="520"/>
</dbReference>
<dbReference type="STRING" id="9913.ENSBTAP00000020206"/>
<dbReference type="PaxDb" id="9913-ENSBTAP00000020206"/>
<dbReference type="PeptideAtlas" id="A6QQT9"/>
<dbReference type="GeneID" id="506955"/>
<dbReference type="KEGG" id="bta:506955"/>
<dbReference type="CTD" id="10994"/>
<dbReference type="VEuPathDB" id="HostDB:ENSBTAG00000015186"/>
<dbReference type="eggNOG" id="KOG1185">
    <property type="taxonomic scope" value="Eukaryota"/>
</dbReference>
<dbReference type="HOGENOM" id="CLU_013748_3_3_1"/>
<dbReference type="InParanoid" id="A6QQT9"/>
<dbReference type="OMA" id="QETDMIG"/>
<dbReference type="OrthoDB" id="16262at2759"/>
<dbReference type="Proteomes" id="UP000009136">
    <property type="component" value="Chromosome 7"/>
</dbReference>
<dbReference type="Bgee" id="ENSBTAG00000015186">
    <property type="expression patterns" value="Expressed in liver and 104 other cell types or tissues"/>
</dbReference>
<dbReference type="GO" id="GO:0005948">
    <property type="term" value="C:acetolactate synthase complex"/>
    <property type="evidence" value="ECO:0000318"/>
    <property type="project" value="GO_Central"/>
</dbReference>
<dbReference type="GO" id="GO:0005789">
    <property type="term" value="C:endoplasmic reticulum membrane"/>
    <property type="evidence" value="ECO:0000250"/>
    <property type="project" value="UniProtKB"/>
</dbReference>
<dbReference type="GO" id="GO:0003984">
    <property type="term" value="F:acetolactate synthase activity"/>
    <property type="evidence" value="ECO:0000318"/>
    <property type="project" value="GO_Central"/>
</dbReference>
<dbReference type="GO" id="GO:0050660">
    <property type="term" value="F:flavin adenine dinucleotide binding"/>
    <property type="evidence" value="ECO:0000318"/>
    <property type="project" value="GO_Central"/>
</dbReference>
<dbReference type="GO" id="GO:0016829">
    <property type="term" value="F:lyase activity"/>
    <property type="evidence" value="ECO:0007669"/>
    <property type="project" value="UniProtKB-KW"/>
</dbReference>
<dbReference type="GO" id="GO:0000287">
    <property type="term" value="F:magnesium ion binding"/>
    <property type="evidence" value="ECO:0007669"/>
    <property type="project" value="InterPro"/>
</dbReference>
<dbReference type="GO" id="GO:0030976">
    <property type="term" value="F:thiamine pyrophosphate binding"/>
    <property type="evidence" value="ECO:0007669"/>
    <property type="project" value="InterPro"/>
</dbReference>
<dbReference type="GO" id="GO:0001561">
    <property type="term" value="P:fatty acid alpha-oxidation"/>
    <property type="evidence" value="ECO:0000250"/>
    <property type="project" value="UniProtKB"/>
</dbReference>
<dbReference type="GO" id="GO:0009097">
    <property type="term" value="P:isoleucine biosynthetic process"/>
    <property type="evidence" value="ECO:0000318"/>
    <property type="project" value="GO_Central"/>
</dbReference>
<dbReference type="GO" id="GO:0009099">
    <property type="term" value="P:L-valine biosynthetic process"/>
    <property type="evidence" value="ECO:0000318"/>
    <property type="project" value="GO_Central"/>
</dbReference>
<dbReference type="CDD" id="cd02004">
    <property type="entry name" value="TPP_BZL_OCoD_HPCL"/>
    <property type="match status" value="1"/>
</dbReference>
<dbReference type="CDD" id="cd07035">
    <property type="entry name" value="TPP_PYR_POX_like"/>
    <property type="match status" value="1"/>
</dbReference>
<dbReference type="FunFam" id="3.40.50.1220:FF:000021">
    <property type="entry name" value="IlvB (bacterial acetolactate synthase)-like"/>
    <property type="match status" value="1"/>
</dbReference>
<dbReference type="FunFam" id="3.40.50.970:FF:000048">
    <property type="entry name" value="IlvB (bacterial acetolactate synthase)-like"/>
    <property type="match status" value="1"/>
</dbReference>
<dbReference type="FunFam" id="3.40.50.970:FF:000043">
    <property type="entry name" value="IlvB acetolactate synthase like"/>
    <property type="match status" value="1"/>
</dbReference>
<dbReference type="Gene3D" id="3.40.50.970">
    <property type="match status" value="2"/>
</dbReference>
<dbReference type="Gene3D" id="3.40.50.1220">
    <property type="entry name" value="TPP-binding domain"/>
    <property type="match status" value="1"/>
</dbReference>
<dbReference type="InterPro" id="IPR029035">
    <property type="entry name" value="DHS-like_NAD/FAD-binding_dom"/>
</dbReference>
<dbReference type="InterPro" id="IPR029061">
    <property type="entry name" value="THDP-binding"/>
</dbReference>
<dbReference type="InterPro" id="IPR012000">
    <property type="entry name" value="Thiamin_PyroP_enz_cen_dom"/>
</dbReference>
<dbReference type="InterPro" id="IPR012001">
    <property type="entry name" value="Thiamin_PyroP_enz_TPP-bd_dom"/>
</dbReference>
<dbReference type="InterPro" id="IPR000399">
    <property type="entry name" value="TPP-bd_CS"/>
</dbReference>
<dbReference type="InterPro" id="IPR045229">
    <property type="entry name" value="TPP_enz"/>
</dbReference>
<dbReference type="InterPro" id="IPR011766">
    <property type="entry name" value="TPP_enzyme_TPP-bd"/>
</dbReference>
<dbReference type="PANTHER" id="PTHR18968:SF166">
    <property type="entry name" value="2-HYDROXYACYL-COA LYASE 2"/>
    <property type="match status" value="1"/>
</dbReference>
<dbReference type="PANTHER" id="PTHR18968">
    <property type="entry name" value="THIAMINE PYROPHOSPHATE ENZYMES"/>
    <property type="match status" value="1"/>
</dbReference>
<dbReference type="Pfam" id="PF02775">
    <property type="entry name" value="TPP_enzyme_C"/>
    <property type="match status" value="1"/>
</dbReference>
<dbReference type="Pfam" id="PF00205">
    <property type="entry name" value="TPP_enzyme_M"/>
    <property type="match status" value="1"/>
</dbReference>
<dbReference type="Pfam" id="PF02776">
    <property type="entry name" value="TPP_enzyme_N"/>
    <property type="match status" value="1"/>
</dbReference>
<dbReference type="SUPFAM" id="SSF52467">
    <property type="entry name" value="DHS-like NAD/FAD-binding domain"/>
    <property type="match status" value="1"/>
</dbReference>
<dbReference type="SUPFAM" id="SSF52518">
    <property type="entry name" value="Thiamin diphosphate-binding fold (THDP-binding)"/>
    <property type="match status" value="2"/>
</dbReference>
<dbReference type="PROSITE" id="PS00187">
    <property type="entry name" value="TPP_ENZYMES"/>
    <property type="match status" value="1"/>
</dbReference>
<proteinExistence type="evidence at transcript level"/>
<keyword id="KW-0256">Endoplasmic reticulum</keyword>
<keyword id="KW-0276">Fatty acid metabolism</keyword>
<keyword id="KW-0443">Lipid metabolism</keyword>
<keyword id="KW-0456">Lyase</keyword>
<keyword id="KW-0460">Magnesium</keyword>
<keyword id="KW-0472">Membrane</keyword>
<keyword id="KW-0479">Metal-binding</keyword>
<keyword id="KW-1185">Reference proteome</keyword>
<keyword id="KW-0786">Thiamine pyrophosphate</keyword>
<keyword id="KW-0812">Transmembrane</keyword>
<keyword id="KW-1133">Transmembrane helix</keyword>